<sequence>MLSHIVEYECQYTDQLYKKRKIWHDGRLKYFQLNNRFMLYTEKDNVLLASEFKINSKELKAILNPEGFDIEEHRIFSQFLVIISNIIEEYDRDIQVAATHVRAYPSNLSVQKQRPLISDNAPSLNHISTAREVHSNIKVTTPNRKQTEDNATKGGFNISKLTLKVNKPFKKPKRILSTNVVNESNRPSIRSQKIQEVTPQLHETNTSTKVQTAGKVALNNDNIAQGNYATITEEAKVRDGSDRKKDMANLSKSGKRRVGGIRRIVHEPLGI</sequence>
<reference key="1">
    <citation type="journal article" date="1997" name="Yeast">
        <title>Sequence analysis of 203 kilobases from Saccharomyces cerevisiae chromosome VII.</title>
        <authorList>
            <person name="Rieger M."/>
            <person name="Brueckner M."/>
            <person name="Schaefer M."/>
            <person name="Mueller-Auer S."/>
        </authorList>
    </citation>
    <scope>NUCLEOTIDE SEQUENCE [GENOMIC DNA]</scope>
    <source>
        <strain>ATCC 204508 / S288c</strain>
    </source>
</reference>
<reference key="2">
    <citation type="journal article" date="1997" name="Nature">
        <title>The nucleotide sequence of Saccharomyces cerevisiae chromosome VII.</title>
        <authorList>
            <person name="Tettelin H."/>
            <person name="Agostoni-Carbone M.L."/>
            <person name="Albermann K."/>
            <person name="Albers M."/>
            <person name="Arroyo J."/>
            <person name="Backes U."/>
            <person name="Barreiros T."/>
            <person name="Bertani I."/>
            <person name="Bjourson A.J."/>
            <person name="Brueckner M."/>
            <person name="Bruschi C.V."/>
            <person name="Carignani G."/>
            <person name="Castagnoli L."/>
            <person name="Cerdan E."/>
            <person name="Clemente M.L."/>
            <person name="Coblenz A."/>
            <person name="Coglievina M."/>
            <person name="Coissac E."/>
            <person name="Defoor E."/>
            <person name="Del Bino S."/>
            <person name="Delius H."/>
            <person name="Delneri D."/>
            <person name="de Wergifosse P."/>
            <person name="Dujon B."/>
            <person name="Durand P."/>
            <person name="Entian K.-D."/>
            <person name="Eraso P."/>
            <person name="Escribano V."/>
            <person name="Fabiani L."/>
            <person name="Fartmann B."/>
            <person name="Feroli F."/>
            <person name="Feuermann M."/>
            <person name="Frontali L."/>
            <person name="Garcia-Gonzalez M."/>
            <person name="Garcia-Saez M.I."/>
            <person name="Goffeau A."/>
            <person name="Guerreiro P."/>
            <person name="Hani J."/>
            <person name="Hansen M."/>
            <person name="Hebling U."/>
            <person name="Hernandez K."/>
            <person name="Heumann K."/>
            <person name="Hilger F."/>
            <person name="Hofmann B."/>
            <person name="Indge K.J."/>
            <person name="James C.M."/>
            <person name="Klima R."/>
            <person name="Koetter P."/>
            <person name="Kramer B."/>
            <person name="Kramer W."/>
            <person name="Lauquin G."/>
            <person name="Leuther H."/>
            <person name="Louis E.J."/>
            <person name="Maillier E."/>
            <person name="Marconi A."/>
            <person name="Martegani E."/>
            <person name="Mazon M.J."/>
            <person name="Mazzoni C."/>
            <person name="McReynolds A.D.K."/>
            <person name="Melchioretto P."/>
            <person name="Mewes H.-W."/>
            <person name="Minenkova O."/>
            <person name="Mueller-Auer S."/>
            <person name="Nawrocki A."/>
            <person name="Netter P."/>
            <person name="Neu R."/>
            <person name="Nombela C."/>
            <person name="Oliver S.G."/>
            <person name="Panzeri L."/>
            <person name="Paoluzi S."/>
            <person name="Plevani P."/>
            <person name="Portetelle D."/>
            <person name="Portillo F."/>
            <person name="Potier S."/>
            <person name="Purnelle B."/>
            <person name="Rieger M."/>
            <person name="Riles L."/>
            <person name="Rinaldi T."/>
            <person name="Robben J."/>
            <person name="Rodrigues-Pousada C."/>
            <person name="Rodriguez-Belmonte E."/>
            <person name="Rodriguez-Torres A.M."/>
            <person name="Rose M."/>
            <person name="Ruzzi M."/>
            <person name="Saliola M."/>
            <person name="Sanchez-Perez M."/>
            <person name="Schaefer B."/>
            <person name="Schaefer M."/>
            <person name="Scharfe M."/>
            <person name="Schmidheini T."/>
            <person name="Schreer A."/>
            <person name="Skala J."/>
            <person name="Souciet J.-L."/>
            <person name="Steensma H.Y."/>
            <person name="Talla E."/>
            <person name="Thierry A."/>
            <person name="Vandenbol M."/>
            <person name="van der Aart Q.J.M."/>
            <person name="Van Dyck L."/>
            <person name="Vanoni M."/>
            <person name="Verhasselt P."/>
            <person name="Voet M."/>
            <person name="Volckaert G."/>
            <person name="Wambutt R."/>
            <person name="Watson M.D."/>
            <person name="Weber N."/>
            <person name="Wedler E."/>
            <person name="Wedler H."/>
            <person name="Wipfli P."/>
            <person name="Wolf K."/>
            <person name="Wright L.F."/>
            <person name="Zaccaria P."/>
            <person name="Zimmermann M."/>
            <person name="Zollner A."/>
            <person name="Kleine K."/>
        </authorList>
    </citation>
    <scope>NUCLEOTIDE SEQUENCE [LARGE SCALE GENOMIC DNA]</scope>
    <source>
        <strain>ATCC 204508 / S288c</strain>
    </source>
</reference>
<reference key="3">
    <citation type="journal article" date="2014" name="G3 (Bethesda)">
        <title>The reference genome sequence of Saccharomyces cerevisiae: Then and now.</title>
        <authorList>
            <person name="Engel S.R."/>
            <person name="Dietrich F.S."/>
            <person name="Fisk D.G."/>
            <person name="Binkley G."/>
            <person name="Balakrishnan R."/>
            <person name="Costanzo M.C."/>
            <person name="Dwight S.S."/>
            <person name="Hitz B.C."/>
            <person name="Karra K."/>
            <person name="Nash R.S."/>
            <person name="Weng S."/>
            <person name="Wong E.D."/>
            <person name="Lloyd P."/>
            <person name="Skrzypek M.S."/>
            <person name="Miyasato S.R."/>
            <person name="Simison M."/>
            <person name="Cherry J.M."/>
        </authorList>
    </citation>
    <scope>GENOME REANNOTATION</scope>
    <source>
        <strain>ATCC 204508 / S288c</strain>
    </source>
</reference>
<gene>
    <name type="ordered locus">YGR042W</name>
</gene>
<organism>
    <name type="scientific">Saccharomyces cerevisiae (strain ATCC 204508 / S288c)</name>
    <name type="common">Baker's yeast</name>
    <dbReference type="NCBI Taxonomy" id="559292"/>
    <lineage>
        <taxon>Eukaryota</taxon>
        <taxon>Fungi</taxon>
        <taxon>Dikarya</taxon>
        <taxon>Ascomycota</taxon>
        <taxon>Saccharomycotina</taxon>
        <taxon>Saccharomycetes</taxon>
        <taxon>Saccharomycetales</taxon>
        <taxon>Saccharomycetaceae</taxon>
        <taxon>Saccharomyces</taxon>
    </lineage>
</organism>
<proteinExistence type="predicted"/>
<keyword id="KW-1185">Reference proteome</keyword>
<feature type="chain" id="PRO_0000202794" description="Uncharacterized protein YGR042W">
    <location>
        <begin position="1"/>
        <end position="271"/>
    </location>
</feature>
<dbReference type="EMBL" id="Z72827">
    <property type="protein sequence ID" value="CAA97040.1"/>
    <property type="molecule type" value="Genomic_DNA"/>
</dbReference>
<dbReference type="EMBL" id="BK006941">
    <property type="protein sequence ID" value="DAA08141.1"/>
    <property type="molecule type" value="Genomic_DNA"/>
</dbReference>
<dbReference type="PIR" id="S64333">
    <property type="entry name" value="S64333"/>
</dbReference>
<dbReference type="BioGRID" id="33289">
    <property type="interactions" value="24"/>
</dbReference>
<dbReference type="DIP" id="DIP-5106N"/>
<dbReference type="FunCoup" id="P53227">
    <property type="interactions" value="4"/>
</dbReference>
<dbReference type="IntAct" id="P53227">
    <property type="interactions" value="3"/>
</dbReference>
<dbReference type="STRING" id="4932.YGR042W"/>
<dbReference type="iPTMnet" id="P53227"/>
<dbReference type="PaxDb" id="4932-YGR042W"/>
<dbReference type="PeptideAtlas" id="P53227"/>
<dbReference type="EnsemblFungi" id="YGR042W_mRNA">
    <property type="protein sequence ID" value="YGR042W"/>
    <property type="gene ID" value="YGR042W"/>
</dbReference>
<dbReference type="KEGG" id="sce:YGR042W"/>
<dbReference type="AGR" id="SGD:S000003274"/>
<dbReference type="SGD" id="S000003274">
    <property type="gene designation" value="YGR042W"/>
</dbReference>
<dbReference type="VEuPathDB" id="FungiDB:YGR042W"/>
<dbReference type="eggNOG" id="ENOG502S1MC">
    <property type="taxonomic scope" value="Eukaryota"/>
</dbReference>
<dbReference type="HOGENOM" id="CLU_073665_0_0_1"/>
<dbReference type="InParanoid" id="P53227"/>
<dbReference type="OMA" id="NNRFMLY"/>
<dbReference type="OrthoDB" id="6513042at2759"/>
<dbReference type="BioCyc" id="YEAST:G3O-30762-MONOMER"/>
<dbReference type="BioGRID-ORCS" id="852933">
    <property type="hits" value="1 hit in 10 CRISPR screens"/>
</dbReference>
<dbReference type="PRO" id="PR:P53227"/>
<dbReference type="Proteomes" id="UP000002311">
    <property type="component" value="Chromosome VII"/>
</dbReference>
<dbReference type="RNAct" id="P53227">
    <property type="molecule type" value="protein"/>
</dbReference>
<dbReference type="GO" id="GO:0000781">
    <property type="term" value="C:chromosome, telomeric region"/>
    <property type="evidence" value="ECO:0000314"/>
    <property type="project" value="SGD"/>
</dbReference>
<dbReference type="GO" id="GO:0005737">
    <property type="term" value="C:cytoplasm"/>
    <property type="evidence" value="ECO:0007005"/>
    <property type="project" value="SGD"/>
</dbReference>
<dbReference type="GO" id="GO:0005634">
    <property type="term" value="C:nucleus"/>
    <property type="evidence" value="ECO:0007005"/>
    <property type="project" value="SGD"/>
</dbReference>
<dbReference type="GO" id="GO:0035861">
    <property type="term" value="C:site of double-strand break"/>
    <property type="evidence" value="ECO:0000314"/>
    <property type="project" value="SGD"/>
</dbReference>
<dbReference type="GO" id="GO:0008047">
    <property type="term" value="F:enzyme activator activity"/>
    <property type="evidence" value="ECO:0000314"/>
    <property type="project" value="SGD"/>
</dbReference>
<dbReference type="GO" id="GO:0032205">
    <property type="term" value="P:negative regulation of telomere maintenance"/>
    <property type="evidence" value="ECO:0000315"/>
    <property type="project" value="SGD"/>
</dbReference>
<dbReference type="InterPro" id="IPR018838">
    <property type="entry name" value="ZGRF1-like_N"/>
</dbReference>
<dbReference type="Pfam" id="PF10382">
    <property type="entry name" value="ZGRF1-like_N"/>
    <property type="match status" value="1"/>
</dbReference>
<protein>
    <recommendedName>
        <fullName>Uncharacterized protein YGR042W</fullName>
    </recommendedName>
</protein>
<name>YG1T_YEAST</name>
<accession>P53227</accession>
<accession>D6VUI0</accession>